<sequence>MTKLNAQVKGSLNVTTPGVQIWRIEAMQMVPVSSSTYGSFFDGDCYIVLAIHKTGSNLSYDIHYWIGQDSSQDEQGAAAIYTTLMDDFLKGRAVQHREVQGNESEAFRGYFKQGIVIRKGGVASGMKKVETNSYDIQRLLHVKGKRNVVAGEVEMSWKSFNRGDVFLLDLGKLIIQWNGPESNRMERLRGMTLAKEIRDQERGGRTYVGVVDGEDEKASPQLMEIMNYVLGQRKELKAAVPDTVVEPALKAALKLYHVSDSEGKVVVREVATRPLTQDLLSHEDCYILDQGGLKIYVWKGKNANPQEKKEAMNQALNFIKAKQYPPSTQVEVQNDGAESAVFQQLFQKWTVPNQTSGLGKTHTVGSVAKVEQVKFDATSMHVQPQVAAQQKMVDDGSGEVEIWRIENLDLVPVESKWVGHFYGGDCYLLLYTYLIGEKQHYLLYIWQGSQASQDEITASAYQAVILDQKYNNEPVQIRVPMGKEPPHLMSIFKGRMVVYQGGTSRANSTEPVPSTRLFQVRGTSVNNTKAFEVPARATSLNSNDIFVLKTQSCCYLWCGKGCSGDEREMAKMVADTISRTEKQVVVEGQEPANFWVALGGKAPYASSKRLQEETLVITPRLFECSNQTGRFLATEIPDFNQDDLEEDDVFLLDVWDQVFFWIGKNANEDEKKAAAVTAQEYLKTHPSGRDPETPIIVVKQGYEPPTFTGWFLAWDPFKWSDSKSYEDLKAELGNSGDWSQITAEIKNPKPDVFNANTNLSSGPLPIFPLEQLVNKPAEELPQGVDPSRREEHLSIEDFTKALGMTPAAFSALPRWKQQNLKKEKGLF</sequence>
<accession>Q29261</accession>
<proteinExistence type="evidence at transcript level"/>
<name>VILI_PIG</name>
<reference key="1">
    <citation type="journal article" date="2004" name="Nucleic Acids Res.">
        <title>PEDE (Pig EST Data Explorer): construction of a database for ESTs derived from porcine full-length cDNA libraries.</title>
        <authorList>
            <person name="Uenishi H."/>
            <person name="Eguchi T."/>
            <person name="Suzuki K."/>
            <person name="Sawazaki T."/>
            <person name="Toki D."/>
            <person name="Shinkai H."/>
            <person name="Okumura N."/>
            <person name="Hamasima N."/>
            <person name="Awata T."/>
        </authorList>
    </citation>
    <scope>NUCLEOTIDE SEQUENCE [LARGE SCALE MRNA]</scope>
    <source>
        <tissue>Intestine</tissue>
    </source>
</reference>
<reference key="2">
    <citation type="journal article" date="1996" name="Mamm. Genome">
        <title>Evaluation and characterization of a porcine small intestine cDNA library: analysis of 839 clones.</title>
        <authorList>
            <person name="Winteroe A.K."/>
            <person name="Fredholm M."/>
            <person name="Davies W."/>
        </authorList>
    </citation>
    <scope>NUCLEOTIDE SEQUENCE [LARGE SCALE MRNA] OF 73-203</scope>
    <source>
        <tissue>Small intestine</tissue>
    </source>
</reference>
<comment type="function">
    <text evidence="1">Epithelial cell-specific Ca(2+)-regulated actin-modifying protein that modulates the reorganization of microvillar actin filaments. Plays a role in the actin nucleation, actin filament bundle assembly, actin filament capping and severing. Binds phosphatidylinositol 4,5-bisphosphate (PIP2) and lysophosphatidic acid (LPA); binds LPA with higher affinity than PIP2. Binding to LPA increases its phosphorylation by SRC and inhibits all actin-modifying activities. Binding to PIP2 inhibits actin-capping and -severing activities but enhances actin-bundling activity. Regulates the intestinal epithelial cell morphology, cell invasion, cell migration and apoptosis. Protects against apoptosis induced by dextran sodium sulfate (DSS) in the gastrointestinal epithelium. Appears to regulate cell death by maintaining mitochondrial integrity. Enhances hepatocyte growth factor (HGF)-induced epithelial cell motility, chemotaxis and wound repair (By similarity).</text>
</comment>
<comment type="subunit">
    <text evidence="1">Monomer. Homodimer; homodimerization is necessary for actin-bundling. Associates with F-actin; phosphorylation at tyrosine residues decreases the association with F-actin. Interacts (phosphorylated at C-terminus tyrosine phosphorylation sites) with PLCG1 (via the SH2 domains). Interacts (phosphorylated form) with PLCG1; the interaction is enhanced by hepatocyte growth factor (HGF) (By similarity).</text>
</comment>
<comment type="subcellular location">
    <subcellularLocation>
        <location evidence="1">Cytoplasm</location>
        <location evidence="1">Cytoskeleton</location>
    </subcellularLocation>
    <subcellularLocation>
        <location evidence="1">Cell projection</location>
        <location evidence="1">Lamellipodium</location>
    </subcellularLocation>
    <subcellularLocation>
        <location evidence="1">Cell projection</location>
        <location evidence="1">Ruffle</location>
    </subcellularLocation>
    <subcellularLocation>
        <location evidence="1">Cell projection</location>
        <location evidence="1">Microvillus</location>
    </subcellularLocation>
    <subcellularLocation>
        <location evidence="1">Cell projection</location>
        <location evidence="1">Filopodium tip</location>
    </subcellularLocation>
    <subcellularLocation>
        <location evidence="1">Cell projection</location>
        <location evidence="1">Filopodium</location>
    </subcellularLocation>
    <text evidence="1">Rapidly redistributed to ruffles and lamellipodia structures in response to autotaxin, lysophosphatidic acid (LPA) and epidermal growth factor (EGF) treatment. Redistributed to the leading edge of hepatocyte growth factor (HGF)-induced lamellipodia (By similarity).</text>
</comment>
<comment type="domain">
    <text evidence="1">Consists of a large core fragment in the N-terminal portion and a small headpiece (HP) in the C-terminal portion. The core fragment is necessary for both actin-nucleating and -severing activities, whereas the HP binds F-actin strongly in both the presence and absence of calcium and is necessary in actin-bundling activity. The Gelsolin-like 1 repeat is necessary for the actin-capping activity. The entire core fragment is necessary for the actin-severing activity. Two major calcium-sensitive sites are involved in conformational changes and determine separate functional properties: the first site (Glu-25, Asp-44 and Glu-74) regulates the actin-capping and actin-severing activities; while the second site (Asp-61, Asp-86 and Ala-93) regulates only the actin-severing activity (By similarity).</text>
</comment>
<comment type="PTM">
    <text evidence="1">Phosphorylated on tyrosine residues by SRC. The unphosphorylated form increases the initial rate of actin-nucleating activity, whereas the tyrosine-phosphorylated form inhibits actin-nucleating activity, enhances actin-bundling activity and enhances actin-severing activity by reducing high Ca(2+) requirements. The tyrosine-phosphorylated form does not regulate actin-capping activity. Tyrosine phosphorylation is essential for cell migration: tyrosine phosphorylation sites in the N-terminus half regulate actin reorganization and cell morphology, whereas tyrosine phosphorylation sites in the C-terminus half regulate cell migration. Tyrosine phosphorylation is induced by epidermal growth factor (EGF) and stimulates cell migration (By similarity).</text>
</comment>
<comment type="similarity">
    <text evidence="5">Belongs to the villin/gelsolin family.</text>
</comment>
<protein>
    <recommendedName>
        <fullName>Villin-1</fullName>
    </recommendedName>
</protein>
<evidence type="ECO:0000250" key="1"/>
<evidence type="ECO:0000250" key="2">
    <source>
        <dbReference type="UniProtKB" id="P09327"/>
    </source>
</evidence>
<evidence type="ECO:0000250" key="3">
    <source>
        <dbReference type="UniProtKB" id="Q62468"/>
    </source>
</evidence>
<evidence type="ECO:0000255" key="4">
    <source>
        <dbReference type="PROSITE-ProRule" id="PRU00595"/>
    </source>
</evidence>
<evidence type="ECO:0000305" key="5"/>
<feature type="chain" id="PRO_0000218729" description="Villin-1">
    <location>
        <begin position="1"/>
        <end position="827"/>
    </location>
</feature>
<feature type="repeat" description="Gelsolin-like 1">
    <location>
        <begin position="28"/>
        <end position="107"/>
    </location>
</feature>
<feature type="repeat" description="Gelsolin-like 2">
    <location>
        <begin position="148"/>
        <end position="216"/>
    </location>
</feature>
<feature type="repeat" description="Gelsolin-like 3">
    <location>
        <begin position="269"/>
        <end position="342"/>
    </location>
</feature>
<feature type="repeat" description="Gelsolin-like 4">
    <location>
        <begin position="409"/>
        <end position="489"/>
    </location>
</feature>
<feature type="repeat" description="Gelsolin-like 5">
    <location>
        <begin position="528"/>
        <end position="595"/>
    </location>
</feature>
<feature type="repeat" description="Gelsolin-like 6">
    <location>
        <begin position="634"/>
        <end position="707"/>
    </location>
</feature>
<feature type="domain" description="HP" evidence="4">
    <location>
        <begin position="761"/>
        <end position="827"/>
    </location>
</feature>
<feature type="region of interest" description="Core">
    <location>
        <begin position="1"/>
        <end position="734"/>
    </location>
</feature>
<feature type="region of interest" description="Necessary for homodimerization" evidence="1">
    <location>
        <begin position="1"/>
        <end position="126"/>
    </location>
</feature>
<feature type="region of interest" description="LPA/PIP2-binding site 1" evidence="1">
    <location>
        <begin position="112"/>
        <end position="119"/>
    </location>
</feature>
<feature type="region of interest" description="LPA/PIP2-binding site 2" evidence="1">
    <location>
        <begin position="138"/>
        <end position="146"/>
    </location>
</feature>
<feature type="region of interest" description="LPA/PIP2-binding site 3" evidence="1">
    <location>
        <begin position="816"/>
        <end position="824"/>
    </location>
</feature>
<feature type="modified residue" description="Phosphoserine" evidence="2">
    <location>
        <position position="366"/>
    </location>
</feature>
<feature type="modified residue" description="Phosphoserine" evidence="3">
    <location>
        <position position="735"/>
    </location>
</feature>
<feature type="sequence conflict" description="In Ref. 2; CAA23122." evidence="5" ref="2">
    <original>E</original>
    <variation>V</variation>
    <location>
        <position position="186"/>
    </location>
</feature>
<feature type="sequence conflict" description="In Ref. 2; CAA23122." evidence="5" ref="2">
    <original>R</original>
    <variation>P</variation>
    <location>
        <position position="198"/>
    </location>
</feature>
<feature type="sequence conflict" description="In Ref. 2; CAA23122." evidence="5" ref="2">
    <original>ER</original>
    <variation>GA</variation>
    <location>
        <begin position="201"/>
        <end position="202"/>
    </location>
</feature>
<keyword id="KW-0117">Actin capping</keyword>
<keyword id="KW-0009">Actin-binding</keyword>
<keyword id="KW-0053">Apoptosis</keyword>
<keyword id="KW-0106">Calcium</keyword>
<keyword id="KW-0966">Cell projection</keyword>
<keyword id="KW-0963">Cytoplasm</keyword>
<keyword id="KW-0206">Cytoskeleton</keyword>
<keyword id="KW-0597">Phosphoprotein</keyword>
<keyword id="KW-1185">Reference proteome</keyword>
<keyword id="KW-0677">Repeat</keyword>
<organism>
    <name type="scientific">Sus scrofa</name>
    <name type="common">Pig</name>
    <dbReference type="NCBI Taxonomy" id="9823"/>
    <lineage>
        <taxon>Eukaryota</taxon>
        <taxon>Metazoa</taxon>
        <taxon>Chordata</taxon>
        <taxon>Craniata</taxon>
        <taxon>Vertebrata</taxon>
        <taxon>Euteleostomi</taxon>
        <taxon>Mammalia</taxon>
        <taxon>Eutheria</taxon>
        <taxon>Laurasiatheria</taxon>
        <taxon>Artiodactyla</taxon>
        <taxon>Suina</taxon>
        <taxon>Suidae</taxon>
        <taxon>Sus</taxon>
    </lineage>
</organism>
<dbReference type="EMBL" id="AK231370">
    <property type="status" value="NOT_ANNOTATED_CDS"/>
    <property type="molecule type" value="mRNA"/>
</dbReference>
<dbReference type="EMBL" id="F14554">
    <property type="protein sequence ID" value="CAA23122.1"/>
    <property type="molecule type" value="mRNA"/>
</dbReference>
<dbReference type="SMR" id="Q29261"/>
<dbReference type="FunCoup" id="Q29261">
    <property type="interactions" value="358"/>
</dbReference>
<dbReference type="STRING" id="9823.ENSSSCP00000017159"/>
<dbReference type="PaxDb" id="9823-ENSSSCP00000017159"/>
<dbReference type="PeptideAtlas" id="Q29261"/>
<dbReference type="eggNOG" id="KOG0443">
    <property type="taxonomic scope" value="Eukaryota"/>
</dbReference>
<dbReference type="InParanoid" id="Q29261"/>
<dbReference type="Proteomes" id="UP000008227">
    <property type="component" value="Unplaced"/>
</dbReference>
<dbReference type="Proteomes" id="UP000314985">
    <property type="component" value="Unplaced"/>
</dbReference>
<dbReference type="Proteomes" id="UP000694570">
    <property type="component" value="Unplaced"/>
</dbReference>
<dbReference type="Proteomes" id="UP000694571">
    <property type="component" value="Unplaced"/>
</dbReference>
<dbReference type="Proteomes" id="UP000694720">
    <property type="component" value="Unplaced"/>
</dbReference>
<dbReference type="Proteomes" id="UP000694722">
    <property type="component" value="Unplaced"/>
</dbReference>
<dbReference type="Proteomes" id="UP000694723">
    <property type="component" value="Unplaced"/>
</dbReference>
<dbReference type="Proteomes" id="UP000694724">
    <property type="component" value="Unplaced"/>
</dbReference>
<dbReference type="Proteomes" id="UP000694725">
    <property type="component" value="Unplaced"/>
</dbReference>
<dbReference type="Proteomes" id="UP000694726">
    <property type="component" value="Unplaced"/>
</dbReference>
<dbReference type="Proteomes" id="UP000694727">
    <property type="component" value="Unplaced"/>
</dbReference>
<dbReference type="Proteomes" id="UP000694728">
    <property type="component" value="Unplaced"/>
</dbReference>
<dbReference type="GO" id="GO:0015629">
    <property type="term" value="C:actin cytoskeleton"/>
    <property type="evidence" value="ECO:0000318"/>
    <property type="project" value="GO_Central"/>
</dbReference>
<dbReference type="GO" id="GO:0032432">
    <property type="term" value="C:actin filament bundle"/>
    <property type="evidence" value="ECO:0000250"/>
    <property type="project" value="UniProtKB"/>
</dbReference>
<dbReference type="GO" id="GO:0005737">
    <property type="term" value="C:cytoplasm"/>
    <property type="evidence" value="ECO:0000318"/>
    <property type="project" value="GO_Central"/>
</dbReference>
<dbReference type="GO" id="GO:0030175">
    <property type="term" value="C:filopodium"/>
    <property type="evidence" value="ECO:0000250"/>
    <property type="project" value="UniProtKB"/>
</dbReference>
<dbReference type="GO" id="GO:0032433">
    <property type="term" value="C:filopodium tip"/>
    <property type="evidence" value="ECO:0000250"/>
    <property type="project" value="UniProtKB"/>
</dbReference>
<dbReference type="GO" id="GO:0030027">
    <property type="term" value="C:lamellipodium"/>
    <property type="evidence" value="ECO:0000250"/>
    <property type="project" value="UniProtKB"/>
</dbReference>
<dbReference type="GO" id="GO:0005902">
    <property type="term" value="C:microvillus"/>
    <property type="evidence" value="ECO:0000250"/>
    <property type="project" value="UniProtKB"/>
</dbReference>
<dbReference type="GO" id="GO:0001726">
    <property type="term" value="C:ruffle"/>
    <property type="evidence" value="ECO:0000250"/>
    <property type="project" value="UniProtKB"/>
</dbReference>
<dbReference type="GO" id="GO:0051015">
    <property type="term" value="F:actin filament binding"/>
    <property type="evidence" value="ECO:0000250"/>
    <property type="project" value="UniProtKB"/>
</dbReference>
<dbReference type="GO" id="GO:0005509">
    <property type="term" value="F:calcium ion binding"/>
    <property type="evidence" value="ECO:0000250"/>
    <property type="project" value="UniProtKB"/>
</dbReference>
<dbReference type="GO" id="GO:0043027">
    <property type="term" value="F:cysteine-type endopeptidase inhibitor activity involved in apoptotic process"/>
    <property type="evidence" value="ECO:0000250"/>
    <property type="project" value="UniProtKB"/>
</dbReference>
<dbReference type="GO" id="GO:0035727">
    <property type="term" value="F:lysophosphatidic acid binding"/>
    <property type="evidence" value="ECO:0000250"/>
    <property type="project" value="UniProtKB"/>
</dbReference>
<dbReference type="GO" id="GO:0005546">
    <property type="term" value="F:phosphatidylinositol-4,5-bisphosphate binding"/>
    <property type="evidence" value="ECO:0000250"/>
    <property type="project" value="UniProtKB"/>
</dbReference>
<dbReference type="GO" id="GO:0042803">
    <property type="term" value="F:protein homodimerization activity"/>
    <property type="evidence" value="ECO:0000250"/>
    <property type="project" value="UniProtKB"/>
</dbReference>
<dbReference type="GO" id="GO:0051693">
    <property type="term" value="P:actin filament capping"/>
    <property type="evidence" value="ECO:0000250"/>
    <property type="project" value="UniProtKB"/>
</dbReference>
<dbReference type="GO" id="GO:0030042">
    <property type="term" value="P:actin filament depolymerization"/>
    <property type="evidence" value="ECO:0000250"/>
    <property type="project" value="UniProtKB"/>
</dbReference>
<dbReference type="GO" id="GO:0030041">
    <property type="term" value="P:actin filament polymerization"/>
    <property type="evidence" value="ECO:0000250"/>
    <property type="project" value="UniProtKB"/>
</dbReference>
<dbReference type="GO" id="GO:0051014">
    <property type="term" value="P:actin filament severing"/>
    <property type="evidence" value="ECO:0000250"/>
    <property type="project" value="UniProtKB"/>
</dbReference>
<dbReference type="GO" id="GO:0008154">
    <property type="term" value="P:actin polymerization or depolymerization"/>
    <property type="evidence" value="ECO:0000318"/>
    <property type="project" value="GO_Central"/>
</dbReference>
<dbReference type="GO" id="GO:0006915">
    <property type="term" value="P:apoptotic process"/>
    <property type="evidence" value="ECO:0007669"/>
    <property type="project" value="UniProtKB-KW"/>
</dbReference>
<dbReference type="GO" id="GO:0051016">
    <property type="term" value="P:barbed-end actin filament capping"/>
    <property type="evidence" value="ECO:0000318"/>
    <property type="project" value="GO_Central"/>
</dbReference>
<dbReference type="GO" id="GO:0071364">
    <property type="term" value="P:cellular response to epidermal growth factor stimulus"/>
    <property type="evidence" value="ECO:0000250"/>
    <property type="project" value="UniProtKB"/>
</dbReference>
<dbReference type="GO" id="GO:0035729">
    <property type="term" value="P:cellular response to hepatocyte growth factor stimulus"/>
    <property type="evidence" value="ECO:0000250"/>
    <property type="project" value="UniProtKB"/>
</dbReference>
<dbReference type="GO" id="GO:0060327">
    <property type="term" value="P:cytoplasmic actin-based contraction involved in cell motility"/>
    <property type="evidence" value="ECO:0000250"/>
    <property type="project" value="UniProtKB"/>
</dbReference>
<dbReference type="GO" id="GO:0007173">
    <property type="term" value="P:epidermal growth factor receptor signaling pathway"/>
    <property type="evidence" value="ECO:0000250"/>
    <property type="project" value="UniProtKB"/>
</dbReference>
<dbReference type="GO" id="GO:0032233">
    <property type="term" value="P:positive regulation of actin filament bundle assembly"/>
    <property type="evidence" value="ECO:0000250"/>
    <property type="project" value="UniProtKB"/>
</dbReference>
<dbReference type="GO" id="GO:0030335">
    <property type="term" value="P:positive regulation of cell migration"/>
    <property type="evidence" value="ECO:0000250"/>
    <property type="project" value="UniProtKB"/>
</dbReference>
<dbReference type="GO" id="GO:0010634">
    <property type="term" value="P:positive regulation of epithelial cell migration"/>
    <property type="evidence" value="ECO:0000250"/>
    <property type="project" value="UniProtKB"/>
</dbReference>
<dbReference type="GO" id="GO:0051125">
    <property type="term" value="P:regulation of actin nucleation"/>
    <property type="evidence" value="ECO:0000250"/>
    <property type="project" value="UniProtKB"/>
</dbReference>
<dbReference type="GO" id="GO:0008360">
    <property type="term" value="P:regulation of cell shape"/>
    <property type="evidence" value="ECO:0000250"/>
    <property type="project" value="UniProtKB"/>
</dbReference>
<dbReference type="GO" id="GO:2000392">
    <property type="term" value="P:regulation of lamellipodium morphogenesis"/>
    <property type="evidence" value="ECO:0000250"/>
    <property type="project" value="UniProtKB"/>
</dbReference>
<dbReference type="GO" id="GO:0061041">
    <property type="term" value="P:regulation of wound healing"/>
    <property type="evidence" value="ECO:0000250"/>
    <property type="project" value="UniProtKB"/>
</dbReference>
<dbReference type="GO" id="GO:0009617">
    <property type="term" value="P:response to bacterium"/>
    <property type="evidence" value="ECO:0000250"/>
    <property type="project" value="UniProtKB"/>
</dbReference>
<dbReference type="CDD" id="cd11290">
    <property type="entry name" value="gelsolin_S1_like"/>
    <property type="match status" value="1"/>
</dbReference>
<dbReference type="CDD" id="cd11289">
    <property type="entry name" value="gelsolin_S2_like"/>
    <property type="match status" value="1"/>
</dbReference>
<dbReference type="CDD" id="cd11292">
    <property type="entry name" value="gelsolin_S3_like"/>
    <property type="match status" value="1"/>
</dbReference>
<dbReference type="CDD" id="cd11293">
    <property type="entry name" value="gelsolin_S4_like"/>
    <property type="match status" value="1"/>
</dbReference>
<dbReference type="CDD" id="cd11288">
    <property type="entry name" value="gelsolin_S5_like"/>
    <property type="match status" value="1"/>
</dbReference>
<dbReference type="CDD" id="cd11291">
    <property type="entry name" value="gelsolin_S6_like"/>
    <property type="match status" value="1"/>
</dbReference>
<dbReference type="FunFam" id="3.40.20.10:FF:000001">
    <property type="entry name" value="Gelsolin"/>
    <property type="match status" value="1"/>
</dbReference>
<dbReference type="FunFam" id="3.40.20.10:FF:000002">
    <property type="entry name" value="Gelsolin"/>
    <property type="match status" value="1"/>
</dbReference>
<dbReference type="FunFam" id="3.40.20.10:FF:000004">
    <property type="entry name" value="Gelsolin"/>
    <property type="match status" value="1"/>
</dbReference>
<dbReference type="FunFam" id="3.40.20.10:FF:000005">
    <property type="entry name" value="Gelsolin"/>
    <property type="match status" value="1"/>
</dbReference>
<dbReference type="FunFam" id="3.40.20.10:FF:000027">
    <property type="entry name" value="Villin 1"/>
    <property type="match status" value="1"/>
</dbReference>
<dbReference type="FunFam" id="1.10.950.10:FF:000005">
    <property type="entry name" value="Villin-1"/>
    <property type="match status" value="1"/>
</dbReference>
<dbReference type="FunFam" id="3.40.20.10:FF:000035">
    <property type="entry name" value="Villin-1"/>
    <property type="match status" value="1"/>
</dbReference>
<dbReference type="Gene3D" id="3.40.20.10">
    <property type="entry name" value="Severin"/>
    <property type="match status" value="6"/>
</dbReference>
<dbReference type="Gene3D" id="1.10.950.10">
    <property type="entry name" value="Villin headpiece domain"/>
    <property type="match status" value="1"/>
</dbReference>
<dbReference type="InterPro" id="IPR029006">
    <property type="entry name" value="ADF-H/Gelsolin-like_dom_sf"/>
</dbReference>
<dbReference type="InterPro" id="IPR007123">
    <property type="entry name" value="Gelsolin-like_dom"/>
</dbReference>
<dbReference type="InterPro" id="IPR036180">
    <property type="entry name" value="Gelsolin-like_dom_sf"/>
</dbReference>
<dbReference type="InterPro" id="IPR007122">
    <property type="entry name" value="Villin/Gelsolin"/>
</dbReference>
<dbReference type="InterPro" id="IPR003128">
    <property type="entry name" value="Villin_headpiece"/>
</dbReference>
<dbReference type="InterPro" id="IPR036886">
    <property type="entry name" value="Villin_headpiece_dom_sf"/>
</dbReference>
<dbReference type="PANTHER" id="PTHR11977">
    <property type="entry name" value="VILLIN"/>
    <property type="match status" value="1"/>
</dbReference>
<dbReference type="PANTHER" id="PTHR11977:SF35">
    <property type="entry name" value="VILLIN-1"/>
    <property type="match status" value="1"/>
</dbReference>
<dbReference type="Pfam" id="PF00626">
    <property type="entry name" value="Gelsolin"/>
    <property type="match status" value="6"/>
</dbReference>
<dbReference type="Pfam" id="PF02209">
    <property type="entry name" value="VHP"/>
    <property type="match status" value="1"/>
</dbReference>
<dbReference type="PRINTS" id="PR00597">
    <property type="entry name" value="GELSOLIN"/>
</dbReference>
<dbReference type="SMART" id="SM00262">
    <property type="entry name" value="GEL"/>
    <property type="match status" value="6"/>
</dbReference>
<dbReference type="SMART" id="SM00153">
    <property type="entry name" value="VHP"/>
    <property type="match status" value="1"/>
</dbReference>
<dbReference type="SUPFAM" id="SSF55753">
    <property type="entry name" value="Actin depolymerizing proteins"/>
    <property type="match status" value="4"/>
</dbReference>
<dbReference type="SUPFAM" id="SSF82754">
    <property type="entry name" value="C-terminal, gelsolin-like domain of Sec23/24"/>
    <property type="match status" value="2"/>
</dbReference>
<dbReference type="SUPFAM" id="SSF47050">
    <property type="entry name" value="VHP, Villin headpiece domain"/>
    <property type="match status" value="1"/>
</dbReference>
<dbReference type="PROSITE" id="PS51089">
    <property type="entry name" value="HP"/>
    <property type="match status" value="1"/>
</dbReference>
<gene>
    <name type="primary">VIL1</name>
    <name type="synonym">VIL</name>
</gene>